<protein>
    <recommendedName>
        <fullName>GDP-L-galactose phosphorylase 1</fullName>
        <ecNumber>2.7.7.69</ecNumber>
    </recommendedName>
    <alternativeName>
        <fullName>Protein VITAMIN C DEFECTIVE 2</fullName>
    </alternativeName>
</protein>
<comment type="function">
    <text evidence="3 4 5 7">Catalyzes a reaction of the Smirnoff-Wheeler pathway, the major route to ascorbate biosynthesis in plants. Acts as a phosphorylase rather than as a transferase. Uses preferentially GDP-L-galactose and GDP-D-glucose as substrates. Lower activity with GDP-L-fucose, very low activity with GDP-D-mannose, and no activity with UDP-D-glucose, UDP-D-galactose or ADP-D-glucose. Highly specific for inorganic phosphate as the guanylyl acceptor.</text>
</comment>
<comment type="catalytic activity">
    <reaction evidence="3 4 5">
        <text>GDP-beta-L-galactose + phosphate = beta-L-galactose 1-phosphate + GDP + H(+)</text>
        <dbReference type="Rhea" id="RHEA:27698"/>
        <dbReference type="ChEBI" id="CHEBI:15378"/>
        <dbReference type="ChEBI" id="CHEBI:43474"/>
        <dbReference type="ChEBI" id="CHEBI:58189"/>
        <dbReference type="ChEBI" id="CHEBI:61454"/>
        <dbReference type="ChEBI" id="CHEBI:75522"/>
        <dbReference type="EC" id="2.7.7.69"/>
    </reaction>
</comment>
<comment type="activity regulation">
    <text>Not inhibited by dithiothreitol, N-ethylmaleimide, phenylmethane sulfonyl fluoride, ascorbate, L-galactose and L-galactonolactone.</text>
</comment>
<comment type="biophysicochemical properties">
    <kinetics>
        <KM evidence="3">0.01 mM for GDP-L-galactose</KM>
        <KM evidence="5">0.25 mM for GDP-L-galactose</KM>
        <KM evidence="7">0.0079 mM for GDP-L-galactose</KM>
        <KM evidence="3">0.0044 mM for GDP-D-glucose</KM>
        <KM evidence="3">0.52 mM for GDP-D-mannose</KM>
        <KM evidence="7">2.4 mM for phosphate (in the presence of GDP-L-galactose)</KM>
        <KM evidence="7">0.76 mM for phosphate (in the presence of GDP-D-glucose)</KM>
        <KM evidence="5">0.25 mM for phosphate</KM>
        <KM evidence="3">45 mM for L-galactose 1-phosphate</KM>
        <KM evidence="3">29 mM for D-glucose 1-phosphate</KM>
        <KM evidence="3">54 mM for D-mannose 1-phosphate</KM>
        <KM evidence="3">67 mM for D-galactose 1-phosphate</KM>
    </kinetics>
    <phDependence>
        <text evidence="5">Optimum pH is 7.5.</text>
    </phDependence>
</comment>
<comment type="pathway">
    <text>Cofactor biosynthesis; L-ascorbate biosynthesis via GDP-alpha-D-mannose pathway; L-ascorbate from GDP-alpha-D-mannose: step 2/5.</text>
</comment>
<comment type="subunit">
    <text evidence="6">Interacts with TLP1.</text>
</comment>
<comment type="subcellular location">
    <subcellularLocation>
        <location evidence="8">Cytoplasm</location>
    </subcellularLocation>
    <subcellularLocation>
        <location evidence="8">Nucleus</location>
    </subcellularLocation>
</comment>
<comment type="tissue specificity">
    <text evidence="5 8">Expressed in leaves, stems, roots, flowers and siliques. Highest expression in green tissues.</text>
</comment>
<comment type="developmental stage">
    <text evidence="8">Expressed in all developmental stages.</text>
</comment>
<comment type="induction">
    <text evidence="2 5 8">By jasmonate, ozone and high light. Circadian-regulation, with a peak in expression at the beginning of the light cycle.</text>
</comment>
<comment type="disruption phenotype">
    <text evidence="5">Dwarf. 20% of the wild-type ascorbate level, due to the partial redundancy with VTC5. Vtc2 and vtc5 double mutants show growth arrest immediately upon germination and are not viable.</text>
</comment>
<comment type="similarity">
    <text evidence="9">Belongs to the GDPGP1 family.</text>
</comment>
<comment type="caution">
    <text evidence="10">According to publications, it is related to the galactose-1-phosphate uridylyltransferase type 1 family and histidine triad superfamily (PubMed:12119013). However, such families are not detected by prediction tools such as Pfam or SUPFAM.</text>
</comment>
<comment type="sequence caution" evidence="9">
    <conflict type="erroneous gene model prediction">
        <sequence resource="EMBL-CDS" id="AAM34266"/>
    </conflict>
</comment>
<comment type="sequence caution" evidence="9">
    <conflict type="erroneous gene model prediction">
        <sequence resource="EMBL-CDS" id="CAB36531"/>
    </conflict>
</comment>
<comment type="sequence caution" evidence="9">
    <conflict type="erroneous gene model prediction">
        <sequence resource="EMBL-CDS" id="CAB79540"/>
    </conflict>
</comment>
<proteinExistence type="evidence at protein level"/>
<keyword id="KW-0060">Ascorbate biosynthesis</keyword>
<keyword id="KW-0963">Cytoplasm</keyword>
<keyword id="KW-0344">Guanine-nucleotide releasing factor</keyword>
<keyword id="KW-0378">Hydrolase</keyword>
<keyword id="KW-0547">Nucleotide-binding</keyword>
<keyword id="KW-0548">Nucleotidyltransferase</keyword>
<keyword id="KW-0539">Nucleus</keyword>
<keyword id="KW-1185">Reference proteome</keyword>
<keyword id="KW-0808">Transferase</keyword>
<feature type="chain" id="PRO_0000402541" description="GDP-L-galactose phosphorylase 1">
    <location>
        <begin position="1"/>
        <end position="442"/>
    </location>
</feature>
<feature type="active site" description="Tele-GMP-histidine intermediate" evidence="9">
    <location>
        <position position="238"/>
    </location>
</feature>
<feature type="mutagenesis site" description="In vtc2-2; loss of activity; dwarf." evidence="1 5">
    <original>G</original>
    <variation>D</variation>
    <location>
        <position position="224"/>
    </location>
</feature>
<feature type="mutagenesis site" description="Strongly reduced activity." evidence="7">
    <original>H</original>
    <variation>N</variation>
    <location>
        <position position="238"/>
    </location>
</feature>
<feature type="mutagenesis site" description="In vtc2-3; strongly reduced ascorbate levels." evidence="1 5">
    <original>S</original>
    <variation>F</variation>
    <location>
        <position position="290"/>
    </location>
</feature>
<feature type="sequence conflict" description="In Ref. 4; AAL07213." evidence="9" ref="4">
    <original>G</original>
    <variation>S</variation>
    <location>
        <position position="396"/>
    </location>
</feature>
<sequence length="442" mass="48970">MLKIKRVPTVVSNYQKDDGAEDPVGCGRNCLGACCLNGARLPLYACKNLVKSGEKLVISHEAIEPPVAFLESLVLGEWEDRFQRGLFRYDVTACETKVIPGKYGFVAQLNEGRHLKKRPTEFRVDKVLQSFDGSKFNFTKVGQEELLFQFEAGEDAQVQFFPCMPIDPENSPSVVAINVSPIEYGHVLLIPRVLDCLPQRIDHKSLLLAVHMAAEAANPYFRLGYNSLGAFATINHLHFQAYYLAMPFPLEKAPTKKITTTVSGVKISELLSYPVRSLLFEGGSSMQELSDTVSDCCVCLQNNNIPFNILISDCGRQIFLMPQCYAEKQALGEVSPEVLETQVNPAVWEISGHMVLKRKEDYEGASEDNAWRLLAEASLSEERFKEVTALAFEAIGCSNQEEDLEGTIVHQQNSSGNVNQKSNRTHGGPITNGTAAECLVLQ</sequence>
<evidence type="ECO:0000269" key="1">
    <source>
    </source>
</evidence>
<evidence type="ECO:0000269" key="2">
    <source>
    </source>
</evidence>
<evidence type="ECO:0000269" key="3">
    <source>
    </source>
</evidence>
<evidence type="ECO:0000269" key="4">
    <source>
    </source>
</evidence>
<evidence type="ECO:0000269" key="5">
    <source>
    </source>
</evidence>
<evidence type="ECO:0000269" key="6">
    <source>
    </source>
</evidence>
<evidence type="ECO:0000269" key="7">
    <source>
    </source>
</evidence>
<evidence type="ECO:0000269" key="8">
    <source>
    </source>
</evidence>
<evidence type="ECO:0000305" key="9"/>
<evidence type="ECO:0000305" key="10">
    <source>
    </source>
</evidence>
<accession>Q8RWE8</accession>
<accession>Q8LKQ7</accession>
<accession>Q940B4</accession>
<accession>Q9SZ25</accession>
<name>GGAP1_ARATH</name>
<gene>
    <name type="primary">VTC2</name>
    <name type="ordered locus">At4g26850</name>
    <name type="ORF">F10M23.190</name>
</gene>
<organism>
    <name type="scientific">Arabidopsis thaliana</name>
    <name type="common">Mouse-ear cress</name>
    <dbReference type="NCBI Taxonomy" id="3702"/>
    <lineage>
        <taxon>Eukaryota</taxon>
        <taxon>Viridiplantae</taxon>
        <taxon>Streptophyta</taxon>
        <taxon>Embryophyta</taxon>
        <taxon>Tracheophyta</taxon>
        <taxon>Spermatophyta</taxon>
        <taxon>Magnoliopsida</taxon>
        <taxon>eudicotyledons</taxon>
        <taxon>Gunneridae</taxon>
        <taxon>Pentapetalae</taxon>
        <taxon>rosids</taxon>
        <taxon>malvids</taxon>
        <taxon>Brassicales</taxon>
        <taxon>Brassicaceae</taxon>
        <taxon>Camelineae</taxon>
        <taxon>Arabidopsis</taxon>
    </lineage>
</organism>
<reference key="1">
    <citation type="journal article" date="2002" name="Plant Physiol.">
        <title>Arabidopsis map-based cloning in the post-genome era.</title>
        <authorList>
            <person name="Jander G."/>
            <person name="Norris S.R."/>
            <person name="Rounsley S.D."/>
            <person name="Bush D.F."/>
            <person name="Levin I.M."/>
            <person name="Last R.L."/>
        </authorList>
    </citation>
    <scope>NUCLEOTIDE SEQUENCE [GENOMIC DNA]</scope>
    <scope>MUTAGENESIS OF GLY-224 AND SER-290</scope>
</reference>
<reference key="2">
    <citation type="journal article" date="1999" name="Nature">
        <title>Sequence and analysis of chromosome 4 of the plant Arabidopsis thaliana.</title>
        <authorList>
            <person name="Mayer K.F.X."/>
            <person name="Schueller C."/>
            <person name="Wambutt R."/>
            <person name="Murphy G."/>
            <person name="Volckaert G."/>
            <person name="Pohl T."/>
            <person name="Duesterhoeft A."/>
            <person name="Stiekema W."/>
            <person name="Entian K.-D."/>
            <person name="Terryn N."/>
            <person name="Harris B."/>
            <person name="Ansorge W."/>
            <person name="Brandt P."/>
            <person name="Grivell L.A."/>
            <person name="Rieger M."/>
            <person name="Weichselgartner M."/>
            <person name="de Simone V."/>
            <person name="Obermaier B."/>
            <person name="Mache R."/>
            <person name="Mueller M."/>
            <person name="Kreis M."/>
            <person name="Delseny M."/>
            <person name="Puigdomenech P."/>
            <person name="Watson M."/>
            <person name="Schmidtheini T."/>
            <person name="Reichert B."/>
            <person name="Portetelle D."/>
            <person name="Perez-Alonso M."/>
            <person name="Boutry M."/>
            <person name="Bancroft I."/>
            <person name="Vos P."/>
            <person name="Hoheisel J."/>
            <person name="Zimmermann W."/>
            <person name="Wedler H."/>
            <person name="Ridley P."/>
            <person name="Langham S.-A."/>
            <person name="McCullagh B."/>
            <person name="Bilham L."/>
            <person name="Robben J."/>
            <person name="van der Schueren J."/>
            <person name="Grymonprez B."/>
            <person name="Chuang Y.-J."/>
            <person name="Vandenbussche F."/>
            <person name="Braeken M."/>
            <person name="Weltjens I."/>
            <person name="Voet M."/>
            <person name="Bastiaens I."/>
            <person name="Aert R."/>
            <person name="Defoor E."/>
            <person name="Weitzenegger T."/>
            <person name="Bothe G."/>
            <person name="Ramsperger U."/>
            <person name="Hilbert H."/>
            <person name="Braun M."/>
            <person name="Holzer E."/>
            <person name="Brandt A."/>
            <person name="Peters S."/>
            <person name="van Staveren M."/>
            <person name="Dirkse W."/>
            <person name="Mooijman P."/>
            <person name="Klein Lankhorst R."/>
            <person name="Rose M."/>
            <person name="Hauf J."/>
            <person name="Koetter P."/>
            <person name="Berneiser S."/>
            <person name="Hempel S."/>
            <person name="Feldpausch M."/>
            <person name="Lamberth S."/>
            <person name="Van den Daele H."/>
            <person name="De Keyser A."/>
            <person name="Buysshaert C."/>
            <person name="Gielen J."/>
            <person name="Villarroel R."/>
            <person name="De Clercq R."/>
            <person name="van Montagu M."/>
            <person name="Rogers J."/>
            <person name="Cronin A."/>
            <person name="Quail M.A."/>
            <person name="Bray-Allen S."/>
            <person name="Clark L."/>
            <person name="Doggett J."/>
            <person name="Hall S."/>
            <person name="Kay M."/>
            <person name="Lennard N."/>
            <person name="McLay K."/>
            <person name="Mayes R."/>
            <person name="Pettett A."/>
            <person name="Rajandream M.A."/>
            <person name="Lyne M."/>
            <person name="Benes V."/>
            <person name="Rechmann S."/>
            <person name="Borkova D."/>
            <person name="Bloecker H."/>
            <person name="Scharfe M."/>
            <person name="Grimm M."/>
            <person name="Loehnert T.-H."/>
            <person name="Dose S."/>
            <person name="de Haan M."/>
            <person name="Maarse A.C."/>
            <person name="Schaefer M."/>
            <person name="Mueller-Auer S."/>
            <person name="Gabel C."/>
            <person name="Fuchs M."/>
            <person name="Fartmann B."/>
            <person name="Granderath K."/>
            <person name="Dauner D."/>
            <person name="Herzl A."/>
            <person name="Neumann S."/>
            <person name="Argiriou A."/>
            <person name="Vitale D."/>
            <person name="Liguori R."/>
            <person name="Piravandi E."/>
            <person name="Massenet O."/>
            <person name="Quigley F."/>
            <person name="Clabauld G."/>
            <person name="Muendlein A."/>
            <person name="Felber R."/>
            <person name="Schnabl S."/>
            <person name="Hiller R."/>
            <person name="Schmidt W."/>
            <person name="Lecharny A."/>
            <person name="Aubourg S."/>
            <person name="Chefdor F."/>
            <person name="Cooke R."/>
            <person name="Berger C."/>
            <person name="Monfort A."/>
            <person name="Casacuberta E."/>
            <person name="Gibbons T."/>
            <person name="Weber N."/>
            <person name="Vandenbol M."/>
            <person name="Bargues M."/>
            <person name="Terol J."/>
            <person name="Torres A."/>
            <person name="Perez-Perez A."/>
            <person name="Purnelle B."/>
            <person name="Bent E."/>
            <person name="Johnson S."/>
            <person name="Tacon D."/>
            <person name="Jesse T."/>
            <person name="Heijnen L."/>
            <person name="Schwarz S."/>
            <person name="Scholler P."/>
            <person name="Heber S."/>
            <person name="Francs P."/>
            <person name="Bielke C."/>
            <person name="Frishman D."/>
            <person name="Haase D."/>
            <person name="Lemcke K."/>
            <person name="Mewes H.-W."/>
            <person name="Stocker S."/>
            <person name="Zaccaria P."/>
            <person name="Bevan M."/>
            <person name="Wilson R.K."/>
            <person name="de la Bastide M."/>
            <person name="Habermann K."/>
            <person name="Parnell L."/>
            <person name="Dedhia N."/>
            <person name="Gnoj L."/>
            <person name="Schutz K."/>
            <person name="Huang E."/>
            <person name="Spiegel L."/>
            <person name="Sekhon M."/>
            <person name="Murray J."/>
            <person name="Sheet P."/>
            <person name="Cordes M."/>
            <person name="Abu-Threideh J."/>
            <person name="Stoneking T."/>
            <person name="Kalicki J."/>
            <person name="Graves T."/>
            <person name="Harmon G."/>
            <person name="Edwards J."/>
            <person name="Latreille P."/>
            <person name="Courtney L."/>
            <person name="Cloud J."/>
            <person name="Abbott A."/>
            <person name="Scott K."/>
            <person name="Johnson D."/>
            <person name="Minx P."/>
            <person name="Bentley D."/>
            <person name="Fulton B."/>
            <person name="Miller N."/>
            <person name="Greco T."/>
            <person name="Kemp K."/>
            <person name="Kramer J."/>
            <person name="Fulton L."/>
            <person name="Mardis E."/>
            <person name="Dante M."/>
            <person name="Pepin K."/>
            <person name="Hillier L.W."/>
            <person name="Nelson J."/>
            <person name="Spieth J."/>
            <person name="Ryan E."/>
            <person name="Andrews S."/>
            <person name="Geisel C."/>
            <person name="Layman D."/>
            <person name="Du H."/>
            <person name="Ali J."/>
            <person name="Berghoff A."/>
            <person name="Jones K."/>
            <person name="Drone K."/>
            <person name="Cotton M."/>
            <person name="Joshu C."/>
            <person name="Antonoiu B."/>
            <person name="Zidanic M."/>
            <person name="Strong C."/>
            <person name="Sun H."/>
            <person name="Lamar B."/>
            <person name="Yordan C."/>
            <person name="Ma P."/>
            <person name="Zhong J."/>
            <person name="Preston R."/>
            <person name="Vil D."/>
            <person name="Shekher M."/>
            <person name="Matero A."/>
            <person name="Shah R."/>
            <person name="Swaby I.K."/>
            <person name="O'Shaughnessy A."/>
            <person name="Rodriguez M."/>
            <person name="Hoffman J."/>
            <person name="Till S."/>
            <person name="Granat S."/>
            <person name="Shohdy N."/>
            <person name="Hasegawa A."/>
            <person name="Hameed A."/>
            <person name="Lodhi M."/>
            <person name="Johnson A."/>
            <person name="Chen E."/>
            <person name="Marra M.A."/>
            <person name="Martienssen R."/>
            <person name="McCombie W.R."/>
        </authorList>
    </citation>
    <scope>NUCLEOTIDE SEQUENCE [LARGE SCALE GENOMIC DNA]</scope>
    <source>
        <strain>cv. Columbia</strain>
    </source>
</reference>
<reference key="3">
    <citation type="journal article" date="2017" name="Plant J.">
        <title>Araport11: a complete reannotation of the Arabidopsis thaliana reference genome.</title>
        <authorList>
            <person name="Cheng C.Y."/>
            <person name="Krishnakumar V."/>
            <person name="Chan A.P."/>
            <person name="Thibaud-Nissen F."/>
            <person name="Schobel S."/>
            <person name="Town C.D."/>
        </authorList>
    </citation>
    <scope>GENOME REANNOTATION</scope>
    <source>
        <strain>cv. Columbia</strain>
    </source>
</reference>
<reference key="4">
    <citation type="journal article" date="2003" name="Science">
        <title>Empirical analysis of transcriptional activity in the Arabidopsis genome.</title>
        <authorList>
            <person name="Yamada K."/>
            <person name="Lim J."/>
            <person name="Dale J.M."/>
            <person name="Chen H."/>
            <person name="Shinn P."/>
            <person name="Palm C.J."/>
            <person name="Southwick A.M."/>
            <person name="Wu H.C."/>
            <person name="Kim C.J."/>
            <person name="Nguyen M."/>
            <person name="Pham P.K."/>
            <person name="Cheuk R.F."/>
            <person name="Karlin-Newmann G."/>
            <person name="Liu S.X."/>
            <person name="Lam B."/>
            <person name="Sakano H."/>
            <person name="Wu T."/>
            <person name="Yu G."/>
            <person name="Miranda M."/>
            <person name="Quach H.L."/>
            <person name="Tripp M."/>
            <person name="Chang C.H."/>
            <person name="Lee J.M."/>
            <person name="Toriumi M.J."/>
            <person name="Chan M.M."/>
            <person name="Tang C.C."/>
            <person name="Onodera C.S."/>
            <person name="Deng J.M."/>
            <person name="Akiyama K."/>
            <person name="Ansari Y."/>
            <person name="Arakawa T."/>
            <person name="Banh J."/>
            <person name="Banno F."/>
            <person name="Bowser L."/>
            <person name="Brooks S.Y."/>
            <person name="Carninci P."/>
            <person name="Chao Q."/>
            <person name="Choy N."/>
            <person name="Enju A."/>
            <person name="Goldsmith A.D."/>
            <person name="Gurjal M."/>
            <person name="Hansen N.F."/>
            <person name="Hayashizaki Y."/>
            <person name="Johnson-Hopson C."/>
            <person name="Hsuan V.W."/>
            <person name="Iida K."/>
            <person name="Karnes M."/>
            <person name="Khan S."/>
            <person name="Koesema E."/>
            <person name="Ishida J."/>
            <person name="Jiang P.X."/>
            <person name="Jones T."/>
            <person name="Kawai J."/>
            <person name="Kamiya A."/>
            <person name="Meyers C."/>
            <person name="Nakajima M."/>
            <person name="Narusaka M."/>
            <person name="Seki M."/>
            <person name="Sakurai T."/>
            <person name="Satou M."/>
            <person name="Tamse R."/>
            <person name="Vaysberg M."/>
            <person name="Wallender E.K."/>
            <person name="Wong C."/>
            <person name="Yamamura Y."/>
            <person name="Yuan S."/>
            <person name="Shinozaki K."/>
            <person name="Davis R.W."/>
            <person name="Theologis A."/>
            <person name="Ecker J.R."/>
        </authorList>
    </citation>
    <scope>NUCLEOTIDE SEQUENCE [LARGE SCALE MRNA]</scope>
    <source>
        <strain>cv. Columbia</strain>
    </source>
</reference>
<reference key="5">
    <citation type="submission" date="2006-07" db="EMBL/GenBank/DDBJ databases">
        <title>Large-scale analysis of RIKEN Arabidopsis full-length (RAFL) cDNAs.</title>
        <authorList>
            <person name="Totoki Y."/>
            <person name="Seki M."/>
            <person name="Ishida J."/>
            <person name="Nakajima M."/>
            <person name="Enju A."/>
            <person name="Morosawa T."/>
            <person name="Kamiya A."/>
            <person name="Narusaka M."/>
            <person name="Shin-i T."/>
            <person name="Nakagawa M."/>
            <person name="Sakamoto N."/>
            <person name="Oishi K."/>
            <person name="Kohara Y."/>
            <person name="Kobayashi M."/>
            <person name="Toyoda A."/>
            <person name="Sakaki Y."/>
            <person name="Sakurai T."/>
            <person name="Iida K."/>
            <person name="Akiyama K."/>
            <person name="Satou M."/>
            <person name="Toyoda T."/>
            <person name="Konagaya A."/>
            <person name="Carninci P."/>
            <person name="Kawai J."/>
            <person name="Hayashizaki Y."/>
            <person name="Shinozaki K."/>
        </authorList>
    </citation>
    <scope>NUCLEOTIDE SEQUENCE [LARGE SCALE MRNA]</scope>
    <source>
        <strain>cv. Columbia</strain>
    </source>
</reference>
<reference key="6">
    <citation type="journal article" date="2002" name="Biochemistry">
        <title>Hint, Fhit, and GalT: function, structure, evolution, and mechanism of three branches of the histidine triad superfamily of nucleotide hydrolases and transferases.</title>
        <authorList>
            <person name="Brenner C."/>
        </authorList>
    </citation>
    <scope>IDENTIFICATION</scope>
</reference>
<reference key="7">
    <citation type="journal article" date="2005" name="Plant J.">
        <title>Coordinated activation of metabolic pathways for antioxidants and defence compounds by jasmonates and their roles in stress tolerance in Arabidopsis.</title>
        <authorList>
            <person name="Sasaki-Sekimoto Y."/>
            <person name="Taki N."/>
            <person name="Obayashi T."/>
            <person name="Aono M."/>
            <person name="Matsumoto F."/>
            <person name="Sakurai N."/>
            <person name="Suzuki H."/>
            <person name="Hirai M.Y."/>
            <person name="Noji M."/>
            <person name="Saito K."/>
            <person name="Masuda T."/>
            <person name="Takamiya K."/>
            <person name="Shibata D."/>
            <person name="Ohta H."/>
        </authorList>
    </citation>
    <scope>INDUCTION BY JASMONATE AND OZONE</scope>
</reference>
<reference key="8">
    <citation type="journal article" date="2007" name="J. Biol. Chem.">
        <title>Arabidopsis VTC2 encodes a GDP-L-galactose phosphorylase, the last unknown enzyme in the Smirnoff-Wheeler pathway to ascorbic acid in plants.</title>
        <authorList>
            <person name="Linster C.L."/>
            <person name="Gomez T.A."/>
            <person name="Christensen K.C."/>
            <person name="Adler L.N."/>
            <person name="Young B.D."/>
            <person name="Brenner C."/>
            <person name="Clarke S.G."/>
        </authorList>
    </citation>
    <scope>FUNCTION</scope>
    <scope>CATALYTIC ACTIVITY</scope>
    <scope>BIOPHYSICOCHEMICAL PROPERTIES</scope>
</reference>
<reference key="9">
    <citation type="journal article" date="2007" name="Plant J.">
        <title>Two genes in Arabidopsis thaliana encoding GDP-L-galactose phosphorylase are required for ascorbate biosynthesis and seedling viability.</title>
        <authorList>
            <person name="Dowdle J."/>
            <person name="Ishikawa T."/>
            <person name="Gatzek S."/>
            <person name="Rolinski S."/>
            <person name="Smirnoff N."/>
        </authorList>
    </citation>
    <scope>FUNCTION</scope>
    <scope>INDUCTION BY LIGHT</scope>
    <scope>MUTAGENESIS OF GLY-224 AND SER-290</scope>
    <scope>CATALYTIC ACTIVITY</scope>
    <scope>BIOPHYSICOCHEMICAL PROPERTIES</scope>
    <scope>TISSUE SPECIFICITY</scope>
    <scope>DISRUPTION PHENOTYPE</scope>
</reference>
<reference key="10">
    <citation type="journal article" date="2007" name="Proc. Natl. Acad. Sci. U.S.A.">
        <title>The missing step of the L-galactose pathway of ascorbate biosynthesis in plants, an L-galactose guanyltransferase, increases leaf ascorbate content.</title>
        <authorList>
            <person name="Laing W.A."/>
            <person name="Wright M.A."/>
            <person name="Cooney J."/>
            <person name="Bulley S.M."/>
        </authorList>
    </citation>
    <scope>FUNCTION</scope>
    <scope>CATALYTIC ACTIVITY</scope>
</reference>
<reference key="11">
    <citation type="journal article" date="2008" name="J. Biol. Chem.">
        <title>A second GDP-L-galactose phosphorylase in arabidopsis en route to vitamin C. Covalent intermediate and substrate requirements for the conserved reaction.</title>
        <authorList>
            <person name="Linster C.L."/>
            <person name="Adler L.N."/>
            <person name="Webb K."/>
            <person name="Christensen K.C."/>
            <person name="Brenner C."/>
            <person name="Clarke S.G."/>
        </authorList>
    </citation>
    <scope>FUNCTION</scope>
    <scope>MUTAGENESIS OF HIS-238</scope>
</reference>
<reference key="12">
    <citation type="journal article" date="2008" name="J. Plant Res.">
        <title>Blue light diminishes interaction of PAS/LOV proteins, putative blue light receptors in Arabidopsis thaliana, with their interacting partners.</title>
        <authorList>
            <person name="Ogura Y."/>
            <person name="Komatsu A."/>
            <person name="Zikihara K."/>
            <person name="Nanjo T."/>
            <person name="Tokutomi S."/>
            <person name="Wada M."/>
            <person name="Kiyosue T."/>
        </authorList>
    </citation>
    <scope>INTERACTION WITH TLP1</scope>
</reference>
<reference key="13">
    <citation type="journal article" date="2008" name="Plant Mol. Biol.">
        <title>An expression analysis of the ascorbate biosynthesis enzyme VTC2.</title>
        <authorList>
            <person name="Muller-Moule P."/>
        </authorList>
    </citation>
    <scope>TISSUE SPECIFICITY</scope>
    <scope>SUBCELLULAR LOCATION</scope>
    <scope>DEVELOPMENTAL STAGE</scope>
    <scope>INDUCTION BY LIGHT</scope>
</reference>
<dbReference type="EC" id="2.7.7.69"/>
<dbReference type="EMBL" id="AF508793">
    <property type="protein sequence ID" value="AAM34266.1"/>
    <property type="status" value="ALT_SEQ"/>
    <property type="molecule type" value="Genomic_DNA"/>
</dbReference>
<dbReference type="EMBL" id="AL035440">
    <property type="protein sequence ID" value="CAB36531.1"/>
    <property type="status" value="ALT_SEQ"/>
    <property type="molecule type" value="Genomic_DNA"/>
</dbReference>
<dbReference type="EMBL" id="AL161565">
    <property type="protein sequence ID" value="CAB79540.1"/>
    <property type="status" value="ALT_SEQ"/>
    <property type="molecule type" value="Genomic_DNA"/>
</dbReference>
<dbReference type="EMBL" id="CP002687">
    <property type="protein sequence ID" value="AEE85260.1"/>
    <property type="molecule type" value="Genomic_DNA"/>
</dbReference>
<dbReference type="EMBL" id="AY056134">
    <property type="protein sequence ID" value="AAL07213.1"/>
    <property type="molecule type" value="mRNA"/>
</dbReference>
<dbReference type="EMBL" id="AY093138">
    <property type="protein sequence ID" value="AAM13137.1"/>
    <property type="molecule type" value="mRNA"/>
</dbReference>
<dbReference type="EMBL" id="BT006589">
    <property type="protein sequence ID" value="AAP31933.1"/>
    <property type="molecule type" value="mRNA"/>
</dbReference>
<dbReference type="EMBL" id="AK226394">
    <property type="protein sequence ID" value="BAE98540.1"/>
    <property type="molecule type" value="mRNA"/>
</dbReference>
<dbReference type="PIR" id="T04808">
    <property type="entry name" value="T04808"/>
</dbReference>
<dbReference type="RefSeq" id="NP_567759.1">
    <property type="nucleotide sequence ID" value="NM_118819.3"/>
</dbReference>
<dbReference type="BioGRID" id="14079">
    <property type="interactions" value="1"/>
</dbReference>
<dbReference type="FunCoup" id="Q8RWE8">
    <property type="interactions" value="1832"/>
</dbReference>
<dbReference type="IntAct" id="Q8RWE8">
    <property type="interactions" value="1"/>
</dbReference>
<dbReference type="STRING" id="3702.Q8RWE8"/>
<dbReference type="iPTMnet" id="Q8RWE8"/>
<dbReference type="PaxDb" id="3702-AT4G26850.1"/>
<dbReference type="ProteomicsDB" id="221833"/>
<dbReference type="EnsemblPlants" id="AT4G26850.1">
    <property type="protein sequence ID" value="AT4G26850.1"/>
    <property type="gene ID" value="AT4G26850"/>
</dbReference>
<dbReference type="GeneID" id="828792"/>
<dbReference type="Gramene" id="AT4G26850.1">
    <property type="protein sequence ID" value="AT4G26850.1"/>
    <property type="gene ID" value="AT4G26850"/>
</dbReference>
<dbReference type="KEGG" id="ath:AT4G26850"/>
<dbReference type="Araport" id="AT4G26850"/>
<dbReference type="TAIR" id="AT4G26850">
    <property type="gene designation" value="VTC2"/>
</dbReference>
<dbReference type="eggNOG" id="KOG2720">
    <property type="taxonomic scope" value="Eukaryota"/>
</dbReference>
<dbReference type="HOGENOM" id="CLU_041964_1_0_1"/>
<dbReference type="InParanoid" id="Q8RWE8"/>
<dbReference type="OMA" id="NCCISGA"/>
<dbReference type="PhylomeDB" id="Q8RWE8"/>
<dbReference type="BioCyc" id="MetaCyc:AT4G26850-MONOMER"/>
<dbReference type="BRENDA" id="2.7.7.69">
    <property type="organism ID" value="399"/>
</dbReference>
<dbReference type="SABIO-RK" id="Q8RWE8"/>
<dbReference type="UniPathway" id="UPA00990">
    <property type="reaction ID" value="UER00932"/>
</dbReference>
<dbReference type="PRO" id="PR:Q8RWE8"/>
<dbReference type="Proteomes" id="UP000006548">
    <property type="component" value="Chromosome 4"/>
</dbReference>
<dbReference type="ExpressionAtlas" id="Q8RWE8">
    <property type="expression patterns" value="baseline and differential"/>
</dbReference>
<dbReference type="GO" id="GO:0005737">
    <property type="term" value="C:cytoplasm"/>
    <property type="evidence" value="ECO:0007669"/>
    <property type="project" value="UniProtKB-SubCell"/>
</dbReference>
<dbReference type="GO" id="GO:0005634">
    <property type="term" value="C:nucleus"/>
    <property type="evidence" value="ECO:0007669"/>
    <property type="project" value="UniProtKB-SubCell"/>
</dbReference>
<dbReference type="GO" id="GO:0080048">
    <property type="term" value="F:GDP-D-glucose phosphorylase activity"/>
    <property type="evidence" value="ECO:0000314"/>
    <property type="project" value="TAIR"/>
</dbReference>
<dbReference type="GO" id="GO:0010472">
    <property type="term" value="F:GDP-galactose:glucose-1-phosphate guanylyltransferase activity"/>
    <property type="evidence" value="ECO:0000314"/>
    <property type="project" value="TAIR"/>
</dbReference>
<dbReference type="GO" id="GO:0010471">
    <property type="term" value="F:GDP-galactose:mannose-1-phosphate guanylyltransferase activity"/>
    <property type="evidence" value="ECO:0000314"/>
    <property type="project" value="TAIR"/>
</dbReference>
<dbReference type="GO" id="GO:0010473">
    <property type="term" value="F:GDP-galactose:myoinositol-1-phosphate guanylyltransferase activity"/>
    <property type="evidence" value="ECO:0000314"/>
    <property type="project" value="TAIR"/>
</dbReference>
<dbReference type="GO" id="GO:0080047">
    <property type="term" value="F:GDP-L-galactose phosphorylase activity"/>
    <property type="evidence" value="ECO:0007669"/>
    <property type="project" value="UniProtKB-EC"/>
</dbReference>
<dbReference type="GO" id="GO:0005085">
    <property type="term" value="F:guanyl-nucleotide exchange factor activity"/>
    <property type="evidence" value="ECO:0007669"/>
    <property type="project" value="UniProtKB-KW"/>
</dbReference>
<dbReference type="GO" id="GO:0016787">
    <property type="term" value="F:hydrolase activity"/>
    <property type="evidence" value="ECO:0007669"/>
    <property type="project" value="UniProtKB-KW"/>
</dbReference>
<dbReference type="GO" id="GO:0008928">
    <property type="term" value="F:mannose-1-phosphate guanylyltransferase (GDP) activity"/>
    <property type="evidence" value="ECO:0000314"/>
    <property type="project" value="TAIR"/>
</dbReference>
<dbReference type="GO" id="GO:0000166">
    <property type="term" value="F:nucleotide binding"/>
    <property type="evidence" value="ECO:0007669"/>
    <property type="project" value="UniProtKB-KW"/>
</dbReference>
<dbReference type="GO" id="GO:0080046">
    <property type="term" value="F:quercetin 4'-O-glucosyltransferase activity"/>
    <property type="evidence" value="ECO:0000314"/>
    <property type="project" value="TAIR"/>
</dbReference>
<dbReference type="GO" id="GO:0052544">
    <property type="term" value="P:defense response by callose deposition in cell wall"/>
    <property type="evidence" value="ECO:0000315"/>
    <property type="project" value="TAIR"/>
</dbReference>
<dbReference type="GO" id="GO:0042742">
    <property type="term" value="P:defense response to bacterium"/>
    <property type="evidence" value="ECO:0000315"/>
    <property type="project" value="TAIR"/>
</dbReference>
<dbReference type="GO" id="GO:0019853">
    <property type="term" value="P:L-ascorbic acid biosynthetic process"/>
    <property type="evidence" value="ECO:0000315"/>
    <property type="project" value="TAIR"/>
</dbReference>
<dbReference type="GO" id="GO:0019852">
    <property type="term" value="P:L-ascorbic acid metabolic process"/>
    <property type="evidence" value="ECO:0000316"/>
    <property type="project" value="TAIR"/>
</dbReference>
<dbReference type="GO" id="GO:0009408">
    <property type="term" value="P:response to heat"/>
    <property type="evidence" value="ECO:0000315"/>
    <property type="project" value="TAIR"/>
</dbReference>
<dbReference type="GO" id="GO:0009753">
    <property type="term" value="P:response to jasmonic acid"/>
    <property type="evidence" value="ECO:0000270"/>
    <property type="project" value="TAIR"/>
</dbReference>
<dbReference type="InterPro" id="IPR026506">
    <property type="entry name" value="GDPGP"/>
</dbReference>
<dbReference type="PANTHER" id="PTHR20884">
    <property type="entry name" value="GDP-D-GLUCOSE PHOSPHORYLASE 1"/>
    <property type="match status" value="1"/>
</dbReference>
<dbReference type="PANTHER" id="PTHR20884:SF21">
    <property type="entry name" value="GDP-L-GALACTOSE PHOSPHORYLASE 1"/>
    <property type="match status" value="1"/>
</dbReference>